<proteinExistence type="evidence at transcript level"/>
<sequence length="437" mass="49492">MEFESVFKMHYPYLAAVIYDDSSTLKDFHPSLTDDFSCVHNVHHKPSMPHTYEIPSKETIRGITPSPCTEAFEACFHGTSNDHVFFGMAYTTPPTIEPNVSHVSHDNTMWENDQNQGFIFGTESTLNQAMADSNQFNMPKPLLSANEDTIMNRRQNNQVMIKTEQIKKKNKRFQMRRICKPTKKASIIKGQWTPEEDKLLVQLVDLHGTKKWSQIAKMLQGRVGKQCRERWHNHLRPDIKKDGWTEEEDIILIKAHKEIGNRWAEIARKLPGRTENTIKNHWNATKRRQHSRRTKGKDEISLSLGSNTLQNYIRSVTYNDDPFMTANANANIGPRNMRGKGKNVMVAVSEYDEGECKYIVDGVNNLGLEDGRIKMPSLAAMSASGSASTSGSASGSGSGVTMEIDEPMTDSWMVMHGCDEVMMNEIALLEMIAHGRL</sequence>
<name>MY118_ARATH</name>
<comment type="function">
    <text evidence="3 4 5 6">Transcription activator that recognizes the motif 5'-TAACGG-3' in the promoter of endosperm-induced genes (PubMed:19066902, PubMed:25194028, PubMed:27681170). Promotes vegetative-to-embryonic transition and the formation of somatic embryos from root explants in a WUS-independent manner but via the expression of embryonic genes (e.g. LEC1, LEC2, FUS3 and WUS) (PubMed:18695688). May play an important role during embryogenesis and seed maturation (PubMed:19066902, PubMed:25194028). Together with MYB115, activates the transcription of S-ACP-DES2/AAD2 and S-ACP-DES3/AAD3 thus promoting the biosynthesis of omega-7 monounsaturated fatty acid in seed endosperm (PubMed:27681170). Negatively regulates maturation genes in the endosperm (PubMed:25194028).</text>
</comment>
<comment type="subcellular location">
    <subcellularLocation>
        <location evidence="1 2 4 6">Nucleus</location>
    </subcellularLocation>
</comment>
<comment type="tissue specificity">
    <text evidence="3 4">Mainly expressed in siliques (PubMed:18695688, PubMed:19066902). Also detected at low levels in leaves and flowers (PubMed:19066902).</text>
</comment>
<comment type="developmental stage">
    <text evidence="3 4 5 6">Expressed in embryos from the early heart stage and throughout embryogenesis (PubMed:18695688, PubMed:19066902). Induced at the onset of the maturation phase in the endosperm, in a high and homogeneous repartition (PubMed:18695688, PubMed:19066902, PubMed:25194028, PubMed:27681170).</text>
</comment>
<comment type="induction">
    <text evidence="5">Induced by LEC2.</text>
</comment>
<comment type="disruption phenotype">
    <text evidence="3 5 6">Single and myb118 myb115 double mutants do not show apparent developmental abnormalities (PubMed:18695688, PubMed:25194028). Reduced omega-7 fatty acids accumulation in the endosperm. The endosperm oil of double mutant myb115 myb118 lacks omega-7 fatty acids (PubMed:27681170). Endosperm-specific derepression of maturation-related genes associated with a partial relocation of storage compounds from the embryo to the endosperm (PubMed:25194028).</text>
</comment>
<comment type="sequence caution" evidence="9">
    <conflict type="erroneous termination">
        <sequence resource="EMBL-CDS" id="ABK28575"/>
    </conflict>
    <text>Extended C-terminus.</text>
</comment>
<organism>
    <name type="scientific">Arabidopsis thaliana</name>
    <name type="common">Mouse-ear cress</name>
    <dbReference type="NCBI Taxonomy" id="3702"/>
    <lineage>
        <taxon>Eukaryota</taxon>
        <taxon>Viridiplantae</taxon>
        <taxon>Streptophyta</taxon>
        <taxon>Embryophyta</taxon>
        <taxon>Tracheophyta</taxon>
        <taxon>Spermatophyta</taxon>
        <taxon>Magnoliopsida</taxon>
        <taxon>eudicotyledons</taxon>
        <taxon>Gunneridae</taxon>
        <taxon>Pentapetalae</taxon>
        <taxon>rosids</taxon>
        <taxon>malvids</taxon>
        <taxon>Brassicales</taxon>
        <taxon>Brassicaceae</taxon>
        <taxon>Camelineae</taxon>
        <taxon>Arabidopsis</taxon>
    </lineage>
</organism>
<gene>
    <name evidence="7" type="primary">MYB118</name>
    <name evidence="8" type="synonym">PGA37</name>
    <name evidence="10" type="ordered locus">At3g27785</name>
    <name evidence="11" type="ORF">MGF10.18</name>
</gene>
<evidence type="ECO:0000255" key="1">
    <source>
        <dbReference type="PROSITE-ProRule" id="PRU00625"/>
    </source>
</evidence>
<evidence type="ECO:0000255" key="2">
    <source>
        <dbReference type="PROSITE-ProRule" id="PRU00768"/>
    </source>
</evidence>
<evidence type="ECO:0000269" key="3">
    <source>
    </source>
</evidence>
<evidence type="ECO:0000269" key="4">
    <source>
    </source>
</evidence>
<evidence type="ECO:0000269" key="5">
    <source>
    </source>
</evidence>
<evidence type="ECO:0000269" key="6">
    <source>
    </source>
</evidence>
<evidence type="ECO:0000303" key="7">
    <source>
    </source>
</evidence>
<evidence type="ECO:0000303" key="8">
    <source>
    </source>
</evidence>
<evidence type="ECO:0000305" key="9"/>
<evidence type="ECO:0000312" key="10">
    <source>
        <dbReference type="Araport" id="AT3G27785"/>
    </source>
</evidence>
<evidence type="ECO:0000312" key="11">
    <source>
        <dbReference type="EMBL" id="BAB02701.1"/>
    </source>
</evidence>
<keyword id="KW-0010">Activator</keyword>
<keyword id="KW-0238">DNA-binding</keyword>
<keyword id="KW-0539">Nucleus</keyword>
<keyword id="KW-1185">Reference proteome</keyword>
<keyword id="KW-0677">Repeat</keyword>
<keyword id="KW-0804">Transcription</keyword>
<keyword id="KW-0805">Transcription regulation</keyword>
<feature type="chain" id="PRO_0000438621" description="Transcription factor MYB118">
    <location>
        <begin position="1"/>
        <end position="437"/>
    </location>
</feature>
<feature type="domain" description="HTH myb-type 1" evidence="1">
    <location>
        <begin position="184"/>
        <end position="239"/>
    </location>
</feature>
<feature type="domain" description="HTH myb-type 2" evidence="1">
    <location>
        <begin position="240"/>
        <end position="290"/>
    </location>
</feature>
<feature type="DNA-binding region" description="H-T-H motif" evidence="1">
    <location>
        <begin position="212"/>
        <end position="235"/>
    </location>
</feature>
<feature type="DNA-binding region" description="H-T-H motif" evidence="1">
    <location>
        <begin position="263"/>
        <end position="286"/>
    </location>
</feature>
<feature type="short sequence motif" description="Nuclear localization signal" evidence="2">
    <location>
        <begin position="152"/>
        <end position="159"/>
    </location>
</feature>
<feature type="sequence conflict" description="In Ref. 2; AAS58517." evidence="9" ref="2">
    <original>E</original>
    <variation>G</variation>
    <location>
        <position position="73"/>
    </location>
</feature>
<dbReference type="EMBL" id="AF334817">
    <property type="protein sequence ID" value="AAK25750.2"/>
    <property type="molecule type" value="mRNA"/>
</dbReference>
<dbReference type="EMBL" id="AY550306">
    <property type="protein sequence ID" value="AAS58517.1"/>
    <property type="molecule type" value="mRNA"/>
</dbReference>
<dbReference type="EMBL" id="AB018114">
    <property type="protein sequence ID" value="BAB02701.1"/>
    <property type="molecule type" value="Genomic_DNA"/>
</dbReference>
<dbReference type="EMBL" id="CP002686">
    <property type="protein sequence ID" value="AEE77363.1"/>
    <property type="molecule type" value="Genomic_DNA"/>
</dbReference>
<dbReference type="EMBL" id="DQ446708">
    <property type="protein sequence ID" value="ABE65974.1"/>
    <property type="molecule type" value="mRNA"/>
</dbReference>
<dbReference type="EMBL" id="DQ653111">
    <property type="protein sequence ID" value="ABK28575.1"/>
    <property type="status" value="ALT_SEQ"/>
    <property type="molecule type" value="mRNA"/>
</dbReference>
<dbReference type="RefSeq" id="NP_189416.2">
    <property type="nucleotide sequence ID" value="NM_113694.2"/>
</dbReference>
<dbReference type="SMR" id="Q9LVW4"/>
<dbReference type="IntAct" id="Q9LVW4">
    <property type="interactions" value="5"/>
</dbReference>
<dbReference type="STRING" id="3702.Q9LVW4"/>
<dbReference type="PaxDb" id="3702-AT3G27785.1"/>
<dbReference type="EnsemblPlants" id="AT3G27785.1">
    <property type="protein sequence ID" value="AT3G27785.1"/>
    <property type="gene ID" value="AT3G27785"/>
</dbReference>
<dbReference type="GeneID" id="822399"/>
<dbReference type="Gramene" id="AT3G27785.1">
    <property type="protein sequence ID" value="AT3G27785.1"/>
    <property type="gene ID" value="AT3G27785"/>
</dbReference>
<dbReference type="KEGG" id="ath:AT3G27785"/>
<dbReference type="Araport" id="AT3G27785"/>
<dbReference type="TAIR" id="AT3G27785">
    <property type="gene designation" value="MYB118"/>
</dbReference>
<dbReference type="eggNOG" id="KOG0048">
    <property type="taxonomic scope" value="Eukaryota"/>
</dbReference>
<dbReference type="HOGENOM" id="CLU_045900_0_0_1"/>
<dbReference type="InParanoid" id="Q9LVW4"/>
<dbReference type="OMA" id="HYPYLAA"/>
<dbReference type="PhylomeDB" id="Q9LVW4"/>
<dbReference type="PRO" id="PR:Q9LVW4"/>
<dbReference type="Proteomes" id="UP000006548">
    <property type="component" value="Chromosome 3"/>
</dbReference>
<dbReference type="ExpressionAtlas" id="Q9LVW4">
    <property type="expression patterns" value="baseline and differential"/>
</dbReference>
<dbReference type="GO" id="GO:0005634">
    <property type="term" value="C:nucleus"/>
    <property type="evidence" value="ECO:0000314"/>
    <property type="project" value="UniProtKB"/>
</dbReference>
<dbReference type="GO" id="GO:0003700">
    <property type="term" value="F:DNA-binding transcription factor activity"/>
    <property type="evidence" value="ECO:0000314"/>
    <property type="project" value="UniProtKB"/>
</dbReference>
<dbReference type="GO" id="GO:0043565">
    <property type="term" value="F:sequence-specific DNA binding"/>
    <property type="evidence" value="ECO:0000314"/>
    <property type="project" value="TAIR"/>
</dbReference>
<dbReference type="GO" id="GO:0000976">
    <property type="term" value="F:transcription cis-regulatory region binding"/>
    <property type="evidence" value="ECO:0000353"/>
    <property type="project" value="TAIR"/>
</dbReference>
<dbReference type="GO" id="GO:0009960">
    <property type="term" value="P:endosperm development"/>
    <property type="evidence" value="ECO:0000316"/>
    <property type="project" value="TAIR"/>
</dbReference>
<dbReference type="GO" id="GO:0055089">
    <property type="term" value="P:fatty acid homeostasis"/>
    <property type="evidence" value="ECO:0000315"/>
    <property type="project" value="UniProtKB"/>
</dbReference>
<dbReference type="GO" id="GO:1904095">
    <property type="term" value="P:negative regulation of endosperm development"/>
    <property type="evidence" value="ECO:0000315"/>
    <property type="project" value="TAIR"/>
</dbReference>
<dbReference type="GO" id="GO:2000692">
    <property type="term" value="P:negative regulation of seed maturation"/>
    <property type="evidence" value="ECO:0000315"/>
    <property type="project" value="TAIR"/>
</dbReference>
<dbReference type="GO" id="GO:0045893">
    <property type="term" value="P:positive regulation of DNA-templated transcription"/>
    <property type="evidence" value="ECO:0000314"/>
    <property type="project" value="UniProtKB"/>
</dbReference>
<dbReference type="GO" id="GO:0045723">
    <property type="term" value="P:positive regulation of fatty acid biosynthetic process"/>
    <property type="evidence" value="ECO:0000316"/>
    <property type="project" value="TAIR"/>
</dbReference>
<dbReference type="GO" id="GO:2001280">
    <property type="term" value="P:positive regulation of unsaturated fatty acid biosynthetic process"/>
    <property type="evidence" value="ECO:0000315"/>
    <property type="project" value="UniProtKB"/>
</dbReference>
<dbReference type="GO" id="GO:0045995">
    <property type="term" value="P:regulation of embryonic development"/>
    <property type="evidence" value="ECO:0000315"/>
    <property type="project" value="UniProtKB"/>
</dbReference>
<dbReference type="GO" id="GO:2000014">
    <property type="term" value="P:regulation of endosperm development"/>
    <property type="evidence" value="ECO:0000315"/>
    <property type="project" value="UniProtKB"/>
</dbReference>
<dbReference type="GO" id="GO:0010439">
    <property type="term" value="P:regulation of glucosinolate biosynthetic process"/>
    <property type="evidence" value="ECO:0000316"/>
    <property type="project" value="TAIR"/>
</dbReference>
<dbReference type="GO" id="GO:2000034">
    <property type="term" value="P:regulation of seed maturation"/>
    <property type="evidence" value="ECO:0000315"/>
    <property type="project" value="UniProtKB"/>
</dbReference>
<dbReference type="GO" id="GO:0010262">
    <property type="term" value="P:somatic embryogenesis"/>
    <property type="evidence" value="ECO:0000315"/>
    <property type="project" value="UniProtKB"/>
</dbReference>
<dbReference type="GO" id="GO:0010228">
    <property type="term" value="P:vegetative to reproductive phase transition of meristem"/>
    <property type="evidence" value="ECO:0000315"/>
    <property type="project" value="UniProtKB"/>
</dbReference>
<dbReference type="CDD" id="cd00167">
    <property type="entry name" value="SANT"/>
    <property type="match status" value="2"/>
</dbReference>
<dbReference type="FunFam" id="1.10.10.60:FF:000381">
    <property type="entry name" value="Transcription factor MYB119"/>
    <property type="match status" value="1"/>
</dbReference>
<dbReference type="FunFam" id="1.10.10.60:FF:000010">
    <property type="entry name" value="Transcriptional activator Myb isoform A"/>
    <property type="match status" value="1"/>
</dbReference>
<dbReference type="Gene3D" id="1.10.10.60">
    <property type="entry name" value="Homeodomain-like"/>
    <property type="match status" value="2"/>
</dbReference>
<dbReference type="InterPro" id="IPR009057">
    <property type="entry name" value="Homeodomain-like_sf"/>
</dbReference>
<dbReference type="InterPro" id="IPR017930">
    <property type="entry name" value="Myb_dom"/>
</dbReference>
<dbReference type="InterPro" id="IPR050560">
    <property type="entry name" value="MYB_TF"/>
</dbReference>
<dbReference type="InterPro" id="IPR001005">
    <property type="entry name" value="SANT/Myb"/>
</dbReference>
<dbReference type="PANTHER" id="PTHR45614:SF273">
    <property type="entry name" value="MYB DOMAIN PROTEIN 100-RELATED"/>
    <property type="match status" value="1"/>
</dbReference>
<dbReference type="PANTHER" id="PTHR45614">
    <property type="entry name" value="MYB PROTEIN-RELATED"/>
    <property type="match status" value="1"/>
</dbReference>
<dbReference type="Pfam" id="PF13921">
    <property type="entry name" value="Myb_DNA-bind_6"/>
    <property type="match status" value="1"/>
</dbReference>
<dbReference type="SMART" id="SM00717">
    <property type="entry name" value="SANT"/>
    <property type="match status" value="2"/>
</dbReference>
<dbReference type="SUPFAM" id="SSF46689">
    <property type="entry name" value="Homeodomain-like"/>
    <property type="match status" value="1"/>
</dbReference>
<dbReference type="PROSITE" id="PS51294">
    <property type="entry name" value="HTH_MYB"/>
    <property type="match status" value="2"/>
</dbReference>
<accession>Q9LVW4</accession>
<accession>A0MEY8</accession>
<accession>Q6QAD0</accession>
<accession>Q9C5P8</accession>
<reference key="1">
    <citation type="journal article" date="2001" name="Curr. Opin. Plant Biol.">
        <title>The R2R3-MYB gene family in Arabidopsis thaliana.</title>
        <authorList>
            <person name="Stracke R."/>
            <person name="Werber M."/>
            <person name="Weisshaar B."/>
        </authorList>
    </citation>
    <scope>NUCLEOTIDE SEQUENCE [MRNA]</scope>
    <scope>GENE FAMILY</scope>
    <scope>NOMENCLATURE</scope>
    <source>
        <strain>cv. Columbia</strain>
    </source>
</reference>
<reference key="2">
    <citation type="journal article" date="2006" name="Plant Mol. Biol.">
        <title>The MYB transcription factor superfamily of Arabidopsis: expression analysis and phylogenetic comparison with the rice MYB family.</title>
        <authorList>
            <person name="Chen Y."/>
            <person name="Yang X."/>
            <person name="He K."/>
            <person name="Liu M."/>
            <person name="Li J."/>
            <person name="Gao Z."/>
            <person name="Lin Z."/>
            <person name="Zhang Y."/>
            <person name="Wang X."/>
            <person name="Qiu X."/>
            <person name="Shen Y."/>
            <person name="Zhang L."/>
            <person name="Deng X."/>
            <person name="Luo J."/>
            <person name="Deng X.-W."/>
            <person name="Chen Z."/>
            <person name="Gu H."/>
            <person name="Qu L.-J."/>
        </authorList>
    </citation>
    <scope>NUCLEOTIDE SEQUENCE [MRNA]</scope>
    <scope>GENE FAMILY</scope>
    <scope>NOMENCLATURE</scope>
    <source>
        <strain>cv. Columbia</strain>
    </source>
</reference>
<reference key="3">
    <citation type="journal article" date="2000" name="DNA Res.">
        <title>Structural analysis of Arabidopsis thaliana chromosome 3. I. Sequence features of the regions of 4,504,864 bp covered by sixty P1 and TAC clones.</title>
        <authorList>
            <person name="Sato S."/>
            <person name="Nakamura Y."/>
            <person name="Kaneko T."/>
            <person name="Katoh T."/>
            <person name="Asamizu E."/>
            <person name="Tabata S."/>
        </authorList>
    </citation>
    <scope>NUCLEOTIDE SEQUENCE [LARGE SCALE GENOMIC DNA]</scope>
    <source>
        <strain>cv. Columbia</strain>
    </source>
</reference>
<reference key="4">
    <citation type="journal article" date="2017" name="Plant J.">
        <title>Araport11: a complete reannotation of the Arabidopsis thaliana reference genome.</title>
        <authorList>
            <person name="Cheng C.Y."/>
            <person name="Krishnakumar V."/>
            <person name="Chan A.P."/>
            <person name="Thibaud-Nissen F."/>
            <person name="Schobel S."/>
            <person name="Town C.D."/>
        </authorList>
    </citation>
    <scope>GENOME REANNOTATION</scope>
    <source>
        <strain>cv. Columbia</strain>
    </source>
</reference>
<reference key="5">
    <citation type="journal article" date="2006" name="Plant Biotechnol. J.">
        <title>Simultaneous high-throughput recombinational cloning of open reading frames in closed and open configurations.</title>
        <authorList>
            <person name="Underwood B.A."/>
            <person name="Vanderhaeghen R."/>
            <person name="Whitford R."/>
            <person name="Town C.D."/>
            <person name="Hilson P."/>
        </authorList>
    </citation>
    <scope>NUCLEOTIDE SEQUENCE [LARGE SCALE MRNA]</scope>
    <source>
        <strain>cv. Columbia</strain>
    </source>
</reference>
<reference key="6">
    <citation type="journal article" date="2009" name="Cell Res.">
        <title>Overexpression of PGA37/MYB118 and MYB115 promotes vegetative-to-embryonic transition in Arabidopsis.</title>
        <authorList>
            <person name="Wang X."/>
            <person name="Niu Q.-W."/>
            <person name="Teng C."/>
            <person name="Li C."/>
            <person name="Mu J."/>
            <person name="Chua N.-H."/>
            <person name="Zuo J."/>
        </authorList>
    </citation>
    <scope>FUNCTION</scope>
    <scope>DISRUPTION PHENOTYPE</scope>
    <scope>TISSUE SPECIFICITY</scope>
    <scope>DEVELOPMENTAL STAGE</scope>
    <source>
        <strain>cv. Columbia</strain>
        <strain>cv. Landsberg erecta</strain>
        <strain>cv. Wassilewskija</strain>
    </source>
</reference>
<reference key="7">
    <citation type="journal article" date="2009" name="Plant Cell Rep.">
        <title>Involvement of an R2R3-MYB transcription factor gene AtMYB118 in embryogenesis in Arabidopsis.</title>
        <authorList>
            <person name="Zhang Y."/>
            <person name="Cao G."/>
            <person name="Qu L.-J."/>
            <person name="Gu H."/>
        </authorList>
    </citation>
    <scope>FUNCTION</scope>
    <scope>SUBCELLULAR LOCATION</scope>
    <scope>TISSUE SPECIFICITY</scope>
    <scope>DEVELOPMENTAL STAGE</scope>
    <source>
        <strain>cv. Columbia</strain>
    </source>
</reference>
<reference key="8">
    <citation type="journal article" date="2014" name="Plant Cell">
        <title>MYB118 represses endosperm maturation in seeds of Arabidopsis.</title>
        <authorList>
            <person name="Barthole G."/>
            <person name="To A."/>
            <person name="Marchive C."/>
            <person name="Brunaud V."/>
            <person name="Soubigou-Taconnat L."/>
            <person name="Berger N."/>
            <person name="Dubreucq B."/>
            <person name="Lepiniec L."/>
            <person name="Baud S."/>
        </authorList>
    </citation>
    <scope>FUNCTION</scope>
    <scope>DEVELOPMENTAL STAGE</scope>
    <scope>DISRUPTION PHENOTYPE</scope>
    <scope>INDUCTION BY LEC2</scope>
    <source>
        <strain>cv. Columbia</strain>
    </source>
</reference>
<reference key="9">
    <citation type="journal article" date="2016" name="Plant Cell">
        <title>Transcriptional activation of two palmitoyl-ACP delta9 desaturase genes by MYB115 and MYB118 is critical for biosynthesis of omega-7 monounsaturated fatty acid in the endosperm of Arabidopsis seeds.</title>
        <authorList>
            <person name="Troncoso-Ponce M.A."/>
            <person name="Barthole G."/>
            <person name="Tremblais G."/>
            <person name="To A."/>
            <person name="Miquel M."/>
            <person name="Lepiniec L."/>
            <person name="Baud S."/>
        </authorList>
    </citation>
    <scope>FUNCTION</scope>
    <scope>DEVELOPMENTAL STAGE</scope>
    <scope>DISRUPTION PHENOTYPE</scope>
    <scope>SUBCELLULAR LOCATION</scope>
    <source>
        <strain>cv. Columbia</strain>
    </source>
</reference>
<protein>
    <recommendedName>
        <fullName evidence="7">Transcription factor MYB118</fullName>
    </recommendedName>
    <alternativeName>
        <fullName evidence="7">Myb-related protein 118</fullName>
        <shortName evidence="7">AtMYB118</shortName>
    </alternativeName>
    <alternativeName>
        <fullName evidence="8">Protein PLANT GROWTH ACTIVATOR 37</fullName>
    </alternativeName>
</protein>